<reference evidence="3" key="1">
    <citation type="journal article" date="2007" name="Science">
        <title>Genome sequence of Aedes aegypti, a major arbovirus vector.</title>
        <authorList>
            <person name="Nene V."/>
            <person name="Wortman J.R."/>
            <person name="Lawson D."/>
            <person name="Haas B.J."/>
            <person name="Kodira C.D."/>
            <person name="Tu Z.J."/>
            <person name="Loftus B.J."/>
            <person name="Xi Z."/>
            <person name="Megy K."/>
            <person name="Grabherr M."/>
            <person name="Ren Q."/>
            <person name="Zdobnov E.M."/>
            <person name="Lobo N.F."/>
            <person name="Campbell K.S."/>
            <person name="Brown S.E."/>
            <person name="Bonaldo M.F."/>
            <person name="Zhu J."/>
            <person name="Sinkins S.P."/>
            <person name="Hogenkamp D.G."/>
            <person name="Amedeo P."/>
            <person name="Arensburger P."/>
            <person name="Atkinson P.W."/>
            <person name="Bidwell S.L."/>
            <person name="Biedler J."/>
            <person name="Birney E."/>
            <person name="Bruggner R.V."/>
            <person name="Costas J."/>
            <person name="Coy M.R."/>
            <person name="Crabtree J."/>
            <person name="Crawford M."/>
            <person name="DeBruyn B."/>
            <person name="DeCaprio D."/>
            <person name="Eiglmeier K."/>
            <person name="Eisenstadt E."/>
            <person name="El-Dorry H."/>
            <person name="Gelbart W.M."/>
            <person name="Gomes S.L."/>
            <person name="Hammond M."/>
            <person name="Hannick L.I."/>
            <person name="Hogan J.R."/>
            <person name="Holmes M.H."/>
            <person name="Jaffe D."/>
            <person name="Johnston S.J."/>
            <person name="Kennedy R.C."/>
            <person name="Koo H."/>
            <person name="Kravitz S."/>
            <person name="Kriventseva E.V."/>
            <person name="Kulp D."/>
            <person name="Labutti K."/>
            <person name="Lee E."/>
            <person name="Li S."/>
            <person name="Lovin D.D."/>
            <person name="Mao C."/>
            <person name="Mauceli E."/>
            <person name="Menck C.F."/>
            <person name="Miller J.R."/>
            <person name="Montgomery P."/>
            <person name="Mori A."/>
            <person name="Nascimento A.L."/>
            <person name="Naveira H.F."/>
            <person name="Nusbaum C."/>
            <person name="O'Leary S.B."/>
            <person name="Orvis J."/>
            <person name="Pertea M."/>
            <person name="Quesneville H."/>
            <person name="Reidenbach K.R."/>
            <person name="Rogers Y.-H.C."/>
            <person name="Roth C.W."/>
            <person name="Schneider J.R."/>
            <person name="Schatz M."/>
            <person name="Shumway M."/>
            <person name="Stanke M."/>
            <person name="Stinson E.O."/>
            <person name="Tubio J.M.C."/>
            <person name="Vanzee J.P."/>
            <person name="Verjovski-Almeida S."/>
            <person name="Werner D."/>
            <person name="White O.R."/>
            <person name="Wyder S."/>
            <person name="Zeng Q."/>
            <person name="Zhao Q."/>
            <person name="Zhao Y."/>
            <person name="Hill C.A."/>
            <person name="Raikhel A.S."/>
            <person name="Soares M.B."/>
            <person name="Knudson D.L."/>
            <person name="Lee N.H."/>
            <person name="Galagan J."/>
            <person name="Salzberg S.L."/>
            <person name="Paulsen I.T."/>
            <person name="Dimopoulos G."/>
            <person name="Collins F.H."/>
            <person name="Bruce B."/>
            <person name="Fraser-Liggett C.M."/>
            <person name="Severson D.W."/>
        </authorList>
    </citation>
    <scope>NUCLEOTIDE SEQUENCE [LARGE SCALE GENOMIC DNA]</scope>
    <source>
        <strain>LVPib12</strain>
    </source>
</reference>
<protein>
    <recommendedName>
        <fullName>Coiled-coil domain-containing protein 22 homolog</fullName>
    </recommendedName>
</protein>
<accession>Q16VW9</accession>
<dbReference type="EMBL" id="CH477579">
    <property type="protein sequence ID" value="EAT38744.1"/>
    <property type="molecule type" value="Genomic_DNA"/>
</dbReference>
<dbReference type="SMR" id="Q16VW9"/>
<dbReference type="FunCoup" id="Q16VW9">
    <property type="interactions" value="1496"/>
</dbReference>
<dbReference type="STRING" id="7159.Q16VW9"/>
<dbReference type="PaxDb" id="7159-AAEL009388-PA"/>
<dbReference type="EnsemblMetazoa" id="AAEL009388-RA">
    <property type="protein sequence ID" value="AAEL009388-PA"/>
    <property type="gene ID" value="AAEL009388"/>
</dbReference>
<dbReference type="EnsemblMetazoa" id="AAEL009388-RB">
    <property type="protein sequence ID" value="AAEL009388-PB"/>
    <property type="gene ID" value="AAEL009388"/>
</dbReference>
<dbReference type="EnsemblMetazoa" id="AAEL009388-RC">
    <property type="protein sequence ID" value="AAEL009388-PC"/>
    <property type="gene ID" value="AAEL009388"/>
</dbReference>
<dbReference type="GeneID" id="5571929"/>
<dbReference type="KEGG" id="aag:5571929"/>
<dbReference type="VEuPathDB" id="VectorBase:AAEL009388"/>
<dbReference type="eggNOG" id="KOG1937">
    <property type="taxonomic scope" value="Eukaryota"/>
</dbReference>
<dbReference type="HOGENOM" id="CLU_024231_1_0_1"/>
<dbReference type="InParanoid" id="Q16VW9"/>
<dbReference type="OMA" id="KFEQHIQ"/>
<dbReference type="OrthoDB" id="10266736at2759"/>
<dbReference type="PhylomeDB" id="Q16VW9"/>
<dbReference type="Proteomes" id="UP000008820">
    <property type="component" value="Chromosome 3"/>
</dbReference>
<dbReference type="Proteomes" id="UP000682892">
    <property type="component" value="Chromosome 3"/>
</dbReference>
<dbReference type="GO" id="GO:0097602">
    <property type="term" value="F:cullin family protein binding"/>
    <property type="evidence" value="ECO:0007669"/>
    <property type="project" value="TreeGrafter"/>
</dbReference>
<dbReference type="GO" id="GO:2000060">
    <property type="term" value="P:positive regulation of ubiquitin-dependent protein catabolic process"/>
    <property type="evidence" value="ECO:0007669"/>
    <property type="project" value="TreeGrafter"/>
</dbReference>
<dbReference type="InterPro" id="IPR008530">
    <property type="entry name" value="CCDC22"/>
</dbReference>
<dbReference type="InterPro" id="IPR048348">
    <property type="entry name" value="CCDC22_CC"/>
</dbReference>
<dbReference type="InterPro" id="IPR048349">
    <property type="entry name" value="CCDC22_N"/>
</dbReference>
<dbReference type="PANTHER" id="PTHR15668:SF4">
    <property type="entry name" value="COILED-COIL DOMAIN-CONTAINING PROTEIN 22"/>
    <property type="match status" value="1"/>
</dbReference>
<dbReference type="PANTHER" id="PTHR15668">
    <property type="entry name" value="JM1 PROTEIN"/>
    <property type="match status" value="1"/>
</dbReference>
<dbReference type="Pfam" id="PF05667">
    <property type="entry name" value="CCDC22_CC"/>
    <property type="match status" value="1"/>
</dbReference>
<dbReference type="Pfam" id="PF21674">
    <property type="entry name" value="CCDC22_N"/>
    <property type="match status" value="1"/>
</dbReference>
<organism>
    <name type="scientific">Aedes aegypti</name>
    <name type="common">Yellowfever mosquito</name>
    <name type="synonym">Culex aegypti</name>
    <dbReference type="NCBI Taxonomy" id="7159"/>
    <lineage>
        <taxon>Eukaryota</taxon>
        <taxon>Metazoa</taxon>
        <taxon>Ecdysozoa</taxon>
        <taxon>Arthropoda</taxon>
        <taxon>Hexapoda</taxon>
        <taxon>Insecta</taxon>
        <taxon>Pterygota</taxon>
        <taxon>Neoptera</taxon>
        <taxon>Endopterygota</taxon>
        <taxon>Diptera</taxon>
        <taxon>Nematocera</taxon>
        <taxon>Culicoidea</taxon>
        <taxon>Culicidae</taxon>
        <taxon>Culicinae</taxon>
        <taxon>Aedini</taxon>
        <taxon>Aedes</taxon>
        <taxon>Stegomyia</taxon>
    </lineage>
</organism>
<evidence type="ECO:0000255" key="1"/>
<evidence type="ECO:0000256" key="2">
    <source>
        <dbReference type="SAM" id="MobiDB-lite"/>
    </source>
</evidence>
<evidence type="ECO:0000312" key="3">
    <source>
        <dbReference type="EMBL" id="EAT38744.1"/>
    </source>
</evidence>
<proteinExistence type="inferred from homology"/>
<comment type="similarity">
    <text evidence="1">Belongs to the CCDC22 family.</text>
</comment>
<gene>
    <name type="ORF">AAEL009388</name>
</gene>
<sequence>MDEIDNIILHSLRQIECNLDEEVISLDDLSPSMLVQVVSKCISLIDPGLELPRTLPPGMAQRFTATASLAEACRTIGYRRDIGYQTFLYSNVAEVRRVLMFLVEKLPKEAADKTSGSGQPVDSATQLENRILSSLQSQLQAPWMPEFCQVGRPEGLSTTSGGESPAQIAFRRFIPRKISVPFVTQGDVAAEVKEFWSRRNLDCLDEGSLVPSLIAANDGAIKTNAKGAIDEVDRQVKLPAINEKLLQYYSKGGTKHRLAEPSGAAASSGTTEKVVLNNITVETKPGKTPLESLQEEIDALQQEIVQHSEEGVQLESSRKETDESIEEYRKTIVRLKEEKKIKERTHILLEDPEVNVKKLEAIIAAGGERMKKLQDQWDAHRIPLVDTLEAYRLKNSDKLSKSQQVLDQIESTRQKCEEVVIDLQTKGAMYARLQKEFEKLNKTVSRTAYTSRILEIIGNIRKQKNGIDQILQDTRSLQKEINNITGQLDRQFTVTDDLIFRNAKKDEHSKRAYKLLVTLHSDCEELIKLVQETGAIKREVRDLEDQIENEKGRNTAANLAQITHDLTEMQNESQRLEESIRRMEVTSRQ</sequence>
<name>CCD22_AEDAE</name>
<feature type="chain" id="PRO_0000347255" description="Coiled-coil domain-containing protein 22 homolog">
    <location>
        <begin position="1"/>
        <end position="589"/>
    </location>
</feature>
<feature type="region of interest" description="Disordered" evidence="2">
    <location>
        <begin position="568"/>
        <end position="589"/>
    </location>
</feature>
<feature type="coiled-coil region" evidence="1">
    <location>
        <begin position="287"/>
        <end position="426"/>
    </location>
</feature>
<feature type="coiled-coil region" evidence="1">
    <location>
        <begin position="523"/>
        <end position="589"/>
    </location>
</feature>
<feature type="compositionally biased region" description="Basic and acidic residues" evidence="2">
    <location>
        <begin position="574"/>
        <end position="589"/>
    </location>
</feature>
<keyword id="KW-0175">Coiled coil</keyword>
<keyword id="KW-1185">Reference proteome</keyword>